<organism>
    <name type="scientific">Chlamydia trachomatis serovar L2b (strain UCH-1/proctitis)</name>
    <dbReference type="NCBI Taxonomy" id="471473"/>
    <lineage>
        <taxon>Bacteria</taxon>
        <taxon>Pseudomonadati</taxon>
        <taxon>Chlamydiota</taxon>
        <taxon>Chlamydiia</taxon>
        <taxon>Chlamydiales</taxon>
        <taxon>Chlamydiaceae</taxon>
        <taxon>Chlamydia/Chlamydophila group</taxon>
        <taxon>Chlamydia</taxon>
    </lineage>
</organism>
<protein>
    <recommendedName>
        <fullName evidence="1">dITP/XTP pyrophosphatase</fullName>
        <ecNumber evidence="1">3.6.1.66</ecNumber>
    </recommendedName>
    <alternativeName>
        <fullName evidence="1">Non-canonical purine NTP pyrophosphatase</fullName>
    </alternativeName>
    <alternativeName>
        <fullName evidence="1">Non-standard purine NTP pyrophosphatase</fullName>
    </alternativeName>
    <alternativeName>
        <fullName evidence="1">Nucleoside-triphosphate diphosphatase</fullName>
    </alternativeName>
    <alternativeName>
        <fullName evidence="1">Nucleoside-triphosphate pyrophosphatase</fullName>
        <shortName evidence="1">NTPase</shortName>
    </alternativeName>
</protein>
<proteinExistence type="inferred from homology"/>
<gene>
    <name type="ordered locus">CTLon_0863</name>
</gene>
<evidence type="ECO:0000255" key="1">
    <source>
        <dbReference type="HAMAP-Rule" id="MF_01405"/>
    </source>
</evidence>
<dbReference type="EC" id="3.6.1.66" evidence="1"/>
<dbReference type="EMBL" id="AM884177">
    <property type="protein sequence ID" value="CAP07260.1"/>
    <property type="molecule type" value="Genomic_DNA"/>
</dbReference>
<dbReference type="RefSeq" id="WP_009873939.1">
    <property type="nucleotide sequence ID" value="NC_010280.2"/>
</dbReference>
<dbReference type="SMR" id="B0BA59"/>
<dbReference type="KEGG" id="ctl:CTLon_0863"/>
<dbReference type="HOGENOM" id="CLU_082080_0_2_0"/>
<dbReference type="Proteomes" id="UP001154401">
    <property type="component" value="Chromosome"/>
</dbReference>
<dbReference type="GO" id="GO:0005829">
    <property type="term" value="C:cytosol"/>
    <property type="evidence" value="ECO:0007669"/>
    <property type="project" value="TreeGrafter"/>
</dbReference>
<dbReference type="GO" id="GO:0035870">
    <property type="term" value="F:dITP diphosphatase activity"/>
    <property type="evidence" value="ECO:0007669"/>
    <property type="project" value="RHEA"/>
</dbReference>
<dbReference type="GO" id="GO:0036220">
    <property type="term" value="F:ITP diphosphatase activity"/>
    <property type="evidence" value="ECO:0007669"/>
    <property type="project" value="UniProtKB-EC"/>
</dbReference>
<dbReference type="GO" id="GO:0046872">
    <property type="term" value="F:metal ion binding"/>
    <property type="evidence" value="ECO:0007669"/>
    <property type="project" value="UniProtKB-KW"/>
</dbReference>
<dbReference type="GO" id="GO:0000166">
    <property type="term" value="F:nucleotide binding"/>
    <property type="evidence" value="ECO:0007669"/>
    <property type="project" value="UniProtKB-KW"/>
</dbReference>
<dbReference type="GO" id="GO:0017111">
    <property type="term" value="F:ribonucleoside triphosphate phosphatase activity"/>
    <property type="evidence" value="ECO:0007669"/>
    <property type="project" value="InterPro"/>
</dbReference>
<dbReference type="GO" id="GO:0036222">
    <property type="term" value="F:XTP diphosphatase activity"/>
    <property type="evidence" value="ECO:0007669"/>
    <property type="project" value="RHEA"/>
</dbReference>
<dbReference type="GO" id="GO:0009117">
    <property type="term" value="P:nucleotide metabolic process"/>
    <property type="evidence" value="ECO:0007669"/>
    <property type="project" value="UniProtKB-KW"/>
</dbReference>
<dbReference type="GO" id="GO:0009146">
    <property type="term" value="P:purine nucleoside triphosphate catabolic process"/>
    <property type="evidence" value="ECO:0007669"/>
    <property type="project" value="UniProtKB-UniRule"/>
</dbReference>
<dbReference type="CDD" id="cd00515">
    <property type="entry name" value="HAM1"/>
    <property type="match status" value="1"/>
</dbReference>
<dbReference type="FunFam" id="3.90.950.10:FF:000001">
    <property type="entry name" value="dITP/XTP pyrophosphatase"/>
    <property type="match status" value="1"/>
</dbReference>
<dbReference type="Gene3D" id="3.90.950.10">
    <property type="match status" value="1"/>
</dbReference>
<dbReference type="HAMAP" id="MF_01405">
    <property type="entry name" value="Non_canon_purine_NTPase"/>
    <property type="match status" value="1"/>
</dbReference>
<dbReference type="InterPro" id="IPR020922">
    <property type="entry name" value="dITP/XTP_pyrophosphatase"/>
</dbReference>
<dbReference type="InterPro" id="IPR029001">
    <property type="entry name" value="ITPase-like_fam"/>
</dbReference>
<dbReference type="InterPro" id="IPR002637">
    <property type="entry name" value="RdgB/HAM1"/>
</dbReference>
<dbReference type="PANTHER" id="PTHR11067:SF9">
    <property type="entry name" value="INOSINE TRIPHOSPHATE PYROPHOSPHATASE"/>
    <property type="match status" value="1"/>
</dbReference>
<dbReference type="PANTHER" id="PTHR11067">
    <property type="entry name" value="INOSINE TRIPHOSPHATE PYROPHOSPHATASE/HAM1 PROTEIN"/>
    <property type="match status" value="1"/>
</dbReference>
<dbReference type="Pfam" id="PF01725">
    <property type="entry name" value="Ham1p_like"/>
    <property type="match status" value="1"/>
</dbReference>
<dbReference type="SUPFAM" id="SSF52972">
    <property type="entry name" value="ITPase-like"/>
    <property type="match status" value="1"/>
</dbReference>
<name>IXTPA_CHLTB</name>
<sequence length="209" mass="23278">MKILIASSHGYKVRETKAFLKKLGEFDIFSLVDYPSYQPPKETGETPEENAIQKGLFAAQTFRCWTIADDSMLIIPALGGLPGKLSASFAGEQANDKDHRKKLLENMRLLENTIDRSAYFECCVALISPFGKIFKAHASCEGTIAFEERGSSGFGYDPLFVKHDYKQTYAELPEAIKNQVSHRAKALVKLQPYVETVLANHLLAGKESL</sequence>
<feature type="chain" id="PRO_1000145485" description="dITP/XTP pyrophosphatase">
    <location>
        <begin position="1"/>
        <end position="209"/>
    </location>
</feature>
<feature type="active site" description="Proton acceptor" evidence="1">
    <location>
        <position position="70"/>
    </location>
</feature>
<feature type="binding site" evidence="1">
    <location>
        <begin position="7"/>
        <end position="12"/>
    </location>
    <ligand>
        <name>substrate</name>
    </ligand>
</feature>
<feature type="binding site" evidence="1">
    <location>
        <position position="70"/>
    </location>
    <ligand>
        <name>Mg(2+)</name>
        <dbReference type="ChEBI" id="CHEBI:18420"/>
    </ligand>
</feature>
<feature type="binding site" evidence="1">
    <location>
        <position position="71"/>
    </location>
    <ligand>
        <name>substrate</name>
    </ligand>
</feature>
<feature type="binding site" evidence="1">
    <location>
        <begin position="154"/>
        <end position="157"/>
    </location>
    <ligand>
        <name>substrate</name>
    </ligand>
</feature>
<feature type="binding site" evidence="1">
    <location>
        <position position="177"/>
    </location>
    <ligand>
        <name>substrate</name>
    </ligand>
</feature>
<feature type="binding site" evidence="1">
    <location>
        <begin position="182"/>
        <end position="183"/>
    </location>
    <ligand>
        <name>substrate</name>
    </ligand>
</feature>
<comment type="function">
    <text evidence="1">Pyrophosphatase that catalyzes the hydrolysis of nucleoside triphosphates to their monophosphate derivatives, with a high preference for the non-canonical purine nucleotides XTP (xanthosine triphosphate), dITP (deoxyinosine triphosphate) and ITP. Seems to function as a house-cleaning enzyme that removes non-canonical purine nucleotides from the nucleotide pool, thus preventing their incorporation into DNA/RNA and avoiding chromosomal lesions.</text>
</comment>
<comment type="catalytic activity">
    <reaction evidence="1">
        <text>XTP + H2O = XMP + diphosphate + H(+)</text>
        <dbReference type="Rhea" id="RHEA:28610"/>
        <dbReference type="ChEBI" id="CHEBI:15377"/>
        <dbReference type="ChEBI" id="CHEBI:15378"/>
        <dbReference type="ChEBI" id="CHEBI:33019"/>
        <dbReference type="ChEBI" id="CHEBI:57464"/>
        <dbReference type="ChEBI" id="CHEBI:61314"/>
        <dbReference type="EC" id="3.6.1.66"/>
    </reaction>
</comment>
<comment type="catalytic activity">
    <reaction evidence="1">
        <text>dITP + H2O = dIMP + diphosphate + H(+)</text>
        <dbReference type="Rhea" id="RHEA:28342"/>
        <dbReference type="ChEBI" id="CHEBI:15377"/>
        <dbReference type="ChEBI" id="CHEBI:15378"/>
        <dbReference type="ChEBI" id="CHEBI:33019"/>
        <dbReference type="ChEBI" id="CHEBI:61194"/>
        <dbReference type="ChEBI" id="CHEBI:61382"/>
        <dbReference type="EC" id="3.6.1.66"/>
    </reaction>
</comment>
<comment type="catalytic activity">
    <reaction evidence="1">
        <text>ITP + H2O = IMP + diphosphate + H(+)</text>
        <dbReference type="Rhea" id="RHEA:29399"/>
        <dbReference type="ChEBI" id="CHEBI:15377"/>
        <dbReference type="ChEBI" id="CHEBI:15378"/>
        <dbReference type="ChEBI" id="CHEBI:33019"/>
        <dbReference type="ChEBI" id="CHEBI:58053"/>
        <dbReference type="ChEBI" id="CHEBI:61402"/>
        <dbReference type="EC" id="3.6.1.66"/>
    </reaction>
</comment>
<comment type="cofactor">
    <cofactor evidence="1">
        <name>Mg(2+)</name>
        <dbReference type="ChEBI" id="CHEBI:18420"/>
    </cofactor>
    <text evidence="1">Binds 1 Mg(2+) ion per subunit.</text>
</comment>
<comment type="subunit">
    <text evidence="1">Homodimer.</text>
</comment>
<comment type="similarity">
    <text evidence="1">Belongs to the HAM1 NTPase family.</text>
</comment>
<keyword id="KW-0378">Hydrolase</keyword>
<keyword id="KW-0460">Magnesium</keyword>
<keyword id="KW-0479">Metal-binding</keyword>
<keyword id="KW-0546">Nucleotide metabolism</keyword>
<keyword id="KW-0547">Nucleotide-binding</keyword>
<accession>B0BA59</accession>
<reference key="1">
    <citation type="journal article" date="2008" name="Genome Res.">
        <title>Chlamydia trachomatis: genome sequence analysis of lymphogranuloma venereum isolates.</title>
        <authorList>
            <person name="Thomson N.R."/>
            <person name="Holden M.T.G."/>
            <person name="Carder C."/>
            <person name="Lennard N."/>
            <person name="Lockey S.J."/>
            <person name="Marsh P."/>
            <person name="Skipp P."/>
            <person name="O'Connor C.D."/>
            <person name="Goodhead I."/>
            <person name="Norbertzcak H."/>
            <person name="Harris B."/>
            <person name="Ormond D."/>
            <person name="Rance R."/>
            <person name="Quail M.A."/>
            <person name="Parkhill J."/>
            <person name="Stephens R.S."/>
            <person name="Clarke I.N."/>
        </authorList>
    </citation>
    <scope>NUCLEOTIDE SEQUENCE [LARGE SCALE GENOMIC DNA]</scope>
    <source>
        <strain>UCH-1/proctitis</strain>
    </source>
</reference>